<dbReference type="EC" id="7.1.1.-"/>
<dbReference type="SMR" id="P85928"/>
<dbReference type="GO" id="GO:0009535">
    <property type="term" value="C:chloroplast thylakoid membrane"/>
    <property type="evidence" value="ECO:0007669"/>
    <property type="project" value="UniProtKB-SubCell"/>
</dbReference>
<dbReference type="GO" id="GO:0048038">
    <property type="term" value="F:quinone binding"/>
    <property type="evidence" value="ECO:0007669"/>
    <property type="project" value="UniProtKB-KW"/>
</dbReference>
<keyword id="KW-0150">Chloroplast</keyword>
<keyword id="KW-0472">Membrane</keyword>
<keyword id="KW-0520">NAD</keyword>
<keyword id="KW-0521">NADP</keyword>
<keyword id="KW-0934">Plastid</keyword>
<keyword id="KW-0618">Plastoquinone</keyword>
<keyword id="KW-0874">Quinone</keyword>
<keyword id="KW-0793">Thylakoid</keyword>
<keyword id="KW-1278">Translocase</keyword>
<keyword id="KW-0812">Transmembrane</keyword>
<keyword id="KW-1133">Transmembrane helix</keyword>
<keyword id="KW-0813">Transport</keyword>
<accession>P85928</accession>
<reference evidence="4" key="1">
    <citation type="journal article" date="2008" name="J. Proteomics">
        <title>A proteomics approach to identify proteins differentially expressed in Douglas-fir seedlings infected by Phellinus sulphurascens.</title>
        <authorList>
            <person name="Islam M.A."/>
            <person name="Sturrock R.N."/>
            <person name="Ekramoddoullah A.K.M."/>
        </authorList>
    </citation>
    <scope>IDENTIFICATION BY MASS SPECTROMETRY</scope>
</reference>
<organism>
    <name type="scientific">Pseudotsuga menziesii</name>
    <name type="common">Douglas-fir</name>
    <name type="synonym">Abies menziesii</name>
    <dbReference type="NCBI Taxonomy" id="3357"/>
    <lineage>
        <taxon>Eukaryota</taxon>
        <taxon>Viridiplantae</taxon>
        <taxon>Streptophyta</taxon>
        <taxon>Embryophyta</taxon>
        <taxon>Tracheophyta</taxon>
        <taxon>Spermatophyta</taxon>
        <taxon>Pinopsida</taxon>
        <taxon>Pinidae</taxon>
        <taxon>Conifers I</taxon>
        <taxon>Pinales</taxon>
        <taxon>Pinaceae</taxon>
        <taxon>Pseudotsuga</taxon>
    </lineage>
</organism>
<comment type="function">
    <text evidence="1">NDH shuttles electrons from NAD(P)H:plastoquinone, via FMN and iron-sulfur (Fe-S) centers, to quinones in the photosynthetic chain and possibly in a chloroplast respiratory chain. The immediate electron acceptor for the enzyme in this species is believed to be plastoquinone. Couples the redox reaction to proton translocation, and thus conserves the redox energy in a proton gradient (By similarity).</text>
</comment>
<comment type="catalytic activity">
    <reaction evidence="4">
        <text>a plastoquinone + NADH + (n+1) H(+)(in) = a plastoquinol + NAD(+) + n H(+)(out)</text>
        <dbReference type="Rhea" id="RHEA:42608"/>
        <dbReference type="Rhea" id="RHEA-COMP:9561"/>
        <dbReference type="Rhea" id="RHEA-COMP:9562"/>
        <dbReference type="ChEBI" id="CHEBI:15378"/>
        <dbReference type="ChEBI" id="CHEBI:17757"/>
        <dbReference type="ChEBI" id="CHEBI:57540"/>
        <dbReference type="ChEBI" id="CHEBI:57945"/>
        <dbReference type="ChEBI" id="CHEBI:62192"/>
    </reaction>
</comment>
<comment type="catalytic activity">
    <reaction evidence="4">
        <text>a plastoquinone + NADPH + (n+1) H(+)(in) = a plastoquinol + NADP(+) + n H(+)(out)</text>
        <dbReference type="Rhea" id="RHEA:42612"/>
        <dbReference type="Rhea" id="RHEA-COMP:9561"/>
        <dbReference type="Rhea" id="RHEA-COMP:9562"/>
        <dbReference type="ChEBI" id="CHEBI:15378"/>
        <dbReference type="ChEBI" id="CHEBI:17757"/>
        <dbReference type="ChEBI" id="CHEBI:57783"/>
        <dbReference type="ChEBI" id="CHEBI:58349"/>
        <dbReference type="ChEBI" id="CHEBI:62192"/>
    </reaction>
</comment>
<comment type="subunit">
    <text evidence="1">NDH is composed of at least 16 different subunits, 5 of which are encoded in the nucleus.</text>
</comment>
<comment type="subcellular location">
    <subcellularLocation>
        <location evidence="1">Plastid</location>
        <location evidence="1">Chloroplast thylakoid membrane</location>
        <topology evidence="1">Multi-pass membrane protein</topology>
    </subcellularLocation>
</comment>
<comment type="similarity">
    <text evidence="2">Belongs to the complex I subunit 5 family.</text>
</comment>
<name>NU5C_PSEMZ</name>
<feature type="chain" id="PRO_0000397954" description="NAD(P)H-quinone oxidoreductase subunit 5, chloroplastic">
    <location>
        <begin position="1" status="less than"/>
        <end position="29" status="greater than"/>
    </location>
</feature>
<feature type="transmembrane region" description="Helical" evidence="1 2">
    <location>
        <begin position="1" status="less than"/>
        <end position="15"/>
    </location>
</feature>
<feature type="non-terminal residue" evidence="3">
    <location>
        <position position="1"/>
    </location>
</feature>
<feature type="non-terminal residue" evidence="3">
    <location>
        <position position="29"/>
    </location>
</feature>
<sequence>SGSIIHSMEANVGYSPDKSQNMVLMGGLK</sequence>
<protein>
    <recommendedName>
        <fullName evidence="1">NAD(P)H-quinone oxidoreductase subunit 5, chloroplastic</fullName>
        <ecNumber>7.1.1.-</ecNumber>
    </recommendedName>
    <alternativeName>
        <fullName evidence="1">NAD(P)H dehydrogenase subunit 5</fullName>
    </alternativeName>
    <alternativeName>
        <fullName evidence="1">NADH-plastoquinone oxidoreductase subunit 5</fullName>
    </alternativeName>
</protein>
<evidence type="ECO:0000250" key="1">
    <source>
        <dbReference type="UniProtKB" id="P15958"/>
    </source>
</evidence>
<evidence type="ECO:0000255" key="2"/>
<evidence type="ECO:0000303" key="3">
    <source>
    </source>
</evidence>
<evidence type="ECO:0000305" key="4"/>
<proteinExistence type="evidence at protein level"/>